<dbReference type="EMBL" id="AF152924">
    <property type="protein sequence ID" value="AAD43533.1"/>
    <property type="molecule type" value="mRNA"/>
</dbReference>
<dbReference type="EMBL" id="AL646046">
    <property type="status" value="NOT_ANNOTATED_CDS"/>
    <property type="molecule type" value="Genomic_DNA"/>
</dbReference>
<dbReference type="EMBL" id="BC032881">
    <property type="protein sequence ID" value="AAH32881.1"/>
    <property type="molecule type" value="mRNA"/>
</dbReference>
<dbReference type="EMBL" id="AK138499">
    <property type="protein sequence ID" value="BAE23686.1"/>
    <property type="molecule type" value="mRNA"/>
</dbReference>
<dbReference type="CCDS" id="CCDS25242.1">
    <molecule id="Q9WV89-1"/>
</dbReference>
<dbReference type="RefSeq" id="NP_035635.1">
    <molecule id="Q9WV89-1"/>
    <property type="nucleotide sequence ID" value="NM_011505.3"/>
</dbReference>
<dbReference type="PDB" id="1WI4">
    <property type="method" value="NMR"/>
    <property type="chains" value="A=12-107"/>
</dbReference>
<dbReference type="PDBsum" id="1WI4"/>
<dbReference type="SMR" id="Q9WV89"/>
<dbReference type="BioGRID" id="203567">
    <property type="interactions" value="1"/>
</dbReference>
<dbReference type="FunCoup" id="Q9WV89">
    <property type="interactions" value="1233"/>
</dbReference>
<dbReference type="STRING" id="10090.ENSMUSP00000116191"/>
<dbReference type="iPTMnet" id="Q9WV89"/>
<dbReference type="PhosphoSitePlus" id="Q9WV89"/>
<dbReference type="PaxDb" id="10090-ENSMUSP00000116191"/>
<dbReference type="PeptideAtlas" id="Q9WV89"/>
<dbReference type="ProteomicsDB" id="254773">
    <molecule id="Q9WV89-1"/>
</dbReference>
<dbReference type="ProteomicsDB" id="254774">
    <molecule id="Q9WV89-2"/>
</dbReference>
<dbReference type="ProteomicsDB" id="254775">
    <molecule id="Q9WV89-3"/>
</dbReference>
<dbReference type="ProteomicsDB" id="254776">
    <molecule id="Q9WV89-4"/>
</dbReference>
<dbReference type="ProteomicsDB" id="254777">
    <molecule id="Q9WV89-5"/>
</dbReference>
<dbReference type="Pumba" id="Q9WV89"/>
<dbReference type="Antibodypedia" id="3574">
    <property type="antibodies" value="117 antibodies from 26 providers"/>
</dbReference>
<dbReference type="DNASU" id="20913"/>
<dbReference type="Ensembl" id="ENSMUST00000020858.14">
    <molecule id="Q9WV89-2"/>
    <property type="protein sequence ID" value="ENSMUSP00000020858.8"/>
    <property type="gene ID" value="ENSMUSG00000020546.15"/>
</dbReference>
<dbReference type="Ensembl" id="ENSMUST00000107872.8">
    <molecule id="Q9WV89-3"/>
    <property type="protein sequence ID" value="ENSMUSP00000103504.2"/>
    <property type="gene ID" value="ENSMUSG00000020546.15"/>
</dbReference>
<dbReference type="Ensembl" id="ENSMUST00000107875.8">
    <molecule id="Q9WV89-5"/>
    <property type="protein sequence ID" value="ENSMUSP00000103507.2"/>
    <property type="gene ID" value="ENSMUSG00000020546.15"/>
</dbReference>
<dbReference type="Ensembl" id="ENSMUST00000143203.8">
    <molecule id="Q9WV89-1"/>
    <property type="protein sequence ID" value="ENSMUSP00000116191.2"/>
    <property type="gene ID" value="ENSMUSG00000020546.15"/>
</dbReference>
<dbReference type="GeneID" id="20913"/>
<dbReference type="KEGG" id="mmu:20913"/>
<dbReference type="UCSC" id="uc007kwu.2">
    <molecule id="Q9WV89-1"/>
    <property type="organism name" value="mouse"/>
</dbReference>
<dbReference type="UCSC" id="uc007kwx.2">
    <molecule id="Q9WV89-2"/>
    <property type="organism name" value="mouse"/>
</dbReference>
<dbReference type="UCSC" id="uc007kwy.2">
    <molecule id="Q9WV89-5"/>
    <property type="organism name" value="mouse"/>
</dbReference>
<dbReference type="AGR" id="MGI:1342296"/>
<dbReference type="CTD" id="252983"/>
<dbReference type="MGI" id="MGI:1342296">
    <property type="gene designation" value="Stxbp4"/>
</dbReference>
<dbReference type="VEuPathDB" id="HostDB:ENSMUSG00000020546"/>
<dbReference type="eggNOG" id="KOG1892">
    <property type="taxonomic scope" value="Eukaryota"/>
</dbReference>
<dbReference type="GeneTree" id="ENSGT00390000002226"/>
<dbReference type="HOGENOM" id="CLU_022133_1_0_1"/>
<dbReference type="InParanoid" id="Q9WV89"/>
<dbReference type="OMA" id="KXEAKAV"/>
<dbReference type="OrthoDB" id="63117at9989"/>
<dbReference type="PhylomeDB" id="Q9WV89"/>
<dbReference type="TreeFam" id="TF331084"/>
<dbReference type="BioGRID-ORCS" id="20913">
    <property type="hits" value="1 hit in 75 CRISPR screens"/>
</dbReference>
<dbReference type="ChiTaRS" id="Stxbp4">
    <property type="organism name" value="mouse"/>
</dbReference>
<dbReference type="EvolutionaryTrace" id="Q9WV89"/>
<dbReference type="PRO" id="PR:Q9WV89"/>
<dbReference type="Proteomes" id="UP000000589">
    <property type="component" value="Chromosome 11"/>
</dbReference>
<dbReference type="RNAct" id="Q9WV89">
    <property type="molecule type" value="protein"/>
</dbReference>
<dbReference type="Bgee" id="ENSMUSG00000020546">
    <property type="expression patterns" value="Expressed in vas deferens and 238 other cell types or tissues"/>
</dbReference>
<dbReference type="ExpressionAtlas" id="Q9WV89">
    <property type="expression patterns" value="baseline and differential"/>
</dbReference>
<dbReference type="GO" id="GO:0045335">
    <property type="term" value="C:phagocytic vesicle"/>
    <property type="evidence" value="ECO:0000314"/>
    <property type="project" value="MGI"/>
</dbReference>
<dbReference type="GO" id="GO:0019905">
    <property type="term" value="F:syntaxin binding"/>
    <property type="evidence" value="ECO:0007669"/>
    <property type="project" value="Ensembl"/>
</dbReference>
<dbReference type="GO" id="GO:0071346">
    <property type="term" value="P:cellular response to type II interferon"/>
    <property type="evidence" value="ECO:0000314"/>
    <property type="project" value="MGI"/>
</dbReference>
<dbReference type="GO" id="GO:0006974">
    <property type="term" value="P:DNA damage response"/>
    <property type="evidence" value="ECO:0007669"/>
    <property type="project" value="Ensembl"/>
</dbReference>
<dbReference type="GO" id="GO:0008286">
    <property type="term" value="P:insulin receptor signaling pathway"/>
    <property type="evidence" value="ECO:0000314"/>
    <property type="project" value="MGI"/>
</dbReference>
<dbReference type="GO" id="GO:1902808">
    <property type="term" value="P:positive regulation of cell cycle G1/S phase transition"/>
    <property type="evidence" value="ECO:0007669"/>
    <property type="project" value="Ensembl"/>
</dbReference>
<dbReference type="GO" id="GO:0010838">
    <property type="term" value="P:positive regulation of keratinocyte proliferation"/>
    <property type="evidence" value="ECO:0007669"/>
    <property type="project" value="Ensembl"/>
</dbReference>
<dbReference type="GO" id="GO:0050821">
    <property type="term" value="P:protein stabilization"/>
    <property type="evidence" value="ECO:0007669"/>
    <property type="project" value="Ensembl"/>
</dbReference>
<dbReference type="GO" id="GO:0006605">
    <property type="term" value="P:protein targeting"/>
    <property type="evidence" value="ECO:0000314"/>
    <property type="project" value="MGI"/>
</dbReference>
<dbReference type="GO" id="GO:0010827">
    <property type="term" value="P:regulation of D-glucose transmembrane transport"/>
    <property type="evidence" value="ECO:0000314"/>
    <property type="project" value="MGI"/>
</dbReference>
<dbReference type="GO" id="GO:0061178">
    <property type="term" value="P:regulation of insulin secretion involved in cellular response to glucose stimulus"/>
    <property type="evidence" value="ECO:0007669"/>
    <property type="project" value="Ensembl"/>
</dbReference>
<dbReference type="CDD" id="cd06698">
    <property type="entry name" value="PDZ1_hSTXBP4-PDZ2_GgSTXBP4-like"/>
    <property type="match status" value="1"/>
</dbReference>
<dbReference type="CDD" id="cd00201">
    <property type="entry name" value="WW"/>
    <property type="match status" value="1"/>
</dbReference>
<dbReference type="FunFam" id="2.20.70.10:FF:000034">
    <property type="entry name" value="syntaxin-binding protein 4 isoform X1"/>
    <property type="match status" value="1"/>
</dbReference>
<dbReference type="FunFam" id="2.30.42.10:FF:000134">
    <property type="entry name" value="syntaxin-binding protein 4 isoform X1"/>
    <property type="match status" value="1"/>
</dbReference>
<dbReference type="Gene3D" id="2.20.70.10">
    <property type="match status" value="1"/>
</dbReference>
<dbReference type="Gene3D" id="2.30.42.10">
    <property type="match status" value="1"/>
</dbReference>
<dbReference type="Gene3D" id="1.10.238.10">
    <property type="entry name" value="EF-hand"/>
    <property type="match status" value="1"/>
</dbReference>
<dbReference type="InterPro" id="IPR001478">
    <property type="entry name" value="PDZ"/>
</dbReference>
<dbReference type="InterPro" id="IPR051342">
    <property type="entry name" value="PDZ_scaffold"/>
</dbReference>
<dbReference type="InterPro" id="IPR036034">
    <property type="entry name" value="PDZ_sf"/>
</dbReference>
<dbReference type="InterPro" id="IPR001202">
    <property type="entry name" value="WW_dom"/>
</dbReference>
<dbReference type="InterPro" id="IPR036020">
    <property type="entry name" value="WW_dom_sf"/>
</dbReference>
<dbReference type="PANTHER" id="PTHR19964">
    <property type="entry name" value="MULTIPLE PDZ DOMAIN PROTEIN"/>
    <property type="match status" value="1"/>
</dbReference>
<dbReference type="PANTHER" id="PTHR19964:SF16">
    <property type="entry name" value="SYNTAXIN-BINDING PROTEIN 4"/>
    <property type="match status" value="1"/>
</dbReference>
<dbReference type="Pfam" id="PF00595">
    <property type="entry name" value="PDZ"/>
    <property type="match status" value="1"/>
</dbReference>
<dbReference type="Pfam" id="PF00397">
    <property type="entry name" value="WW"/>
    <property type="match status" value="1"/>
</dbReference>
<dbReference type="SMART" id="SM00228">
    <property type="entry name" value="PDZ"/>
    <property type="match status" value="1"/>
</dbReference>
<dbReference type="SMART" id="SM00456">
    <property type="entry name" value="WW"/>
    <property type="match status" value="1"/>
</dbReference>
<dbReference type="SUPFAM" id="SSF50156">
    <property type="entry name" value="PDZ domain-like"/>
    <property type="match status" value="1"/>
</dbReference>
<dbReference type="SUPFAM" id="SSF51045">
    <property type="entry name" value="WW domain"/>
    <property type="match status" value="1"/>
</dbReference>
<dbReference type="PROSITE" id="PS50106">
    <property type="entry name" value="PDZ"/>
    <property type="match status" value="1"/>
</dbReference>
<dbReference type="PROSITE" id="PS01159">
    <property type="entry name" value="WW_DOMAIN_1"/>
    <property type="match status" value="1"/>
</dbReference>
<dbReference type="PROSITE" id="PS50020">
    <property type="entry name" value="WW_DOMAIN_2"/>
    <property type="match status" value="1"/>
</dbReference>
<accession>Q9WV89</accession>
<accession>Q5SUA6</accession>
<accession>Q5SUA8</accession>
<accession>Q5SUA9</accession>
<accession>Q8CFL1</accession>
<sequence length="557" mass="61689">MSDGTASARSSSPLDRDPAFRVITVTKETGLGLKILGGINRNEGPLVYIHEVIPGGDCYKDGRLKPGDQLVSINKESMIGVSFEEAKSIITRAKLRSESPWEIAFIRQKSYCGHPGNICCPSPQVSEDCGPQTSTFTLLSSPSETLLPKTSSTPQTQDSTFPSCKAIQTKPEHDKTEHSPITSLDNSPADTSNADIAPAWTDDDSGPQGKISLNPSVRLKAEKLEMALNYLGIQPTKEQREALREQVQADSKGTVSFGDFVQVARSLFCLQLDEVNVGVHEIPSILDSQLLPCDSLEADEVGKLRQERNAALEERNVLKEKLLESEKHRKQLIEELQNVKQEAKAVAEETRALRSRIHLAEAAQRQAHGMEMDYEEVIRLLEAEVSELKAQLADYSDQNKESVQDLRKRVTVLDCQLRKSEMARKAFKASTERLLGFIEAIQEVLLDSSAPLSTLSERRAVLASQTSLPLLARNGRSFPATLLLESKELVRSVRAILDMDCLPYGWEEAYTADGIKYFINHVTQTTSWIHPVMSALNLSCAEESEEDCPRELTDPKS</sequence>
<comment type="function">
    <text evidence="6 7">Plays a role in the translocation of transport vesicles from the cytoplasm to the plasma membrane. Inhibits the translocation of SLC2A4 from intracellular vesicles to the plasma membrane by STX4A binding and preventing the interaction between STX4A and VAMP2. Stimulation with insulin disrupts the interaction with STX4A, leading to increased levels of SLC2A4 at the plasma membrane. May also play a role in the regulation of insulin release by pancreatic beta cells after stimulation by glucose.</text>
</comment>
<comment type="subunit">
    <text evidence="6">Interacts with STX4A.</text>
</comment>
<comment type="subcellular location">
    <subcellularLocation>
        <location evidence="6">Cytoplasm</location>
    </subcellularLocation>
</comment>
<comment type="alternative products">
    <event type="alternative splicing"/>
    <isoform>
        <id>Q9WV89-1</id>
        <name>1</name>
        <sequence type="displayed"/>
    </isoform>
    <isoform>
        <id>Q9WV89-2</id>
        <name>2</name>
        <sequence type="described" ref="VSP_017183"/>
    </isoform>
    <isoform>
        <id>Q9WV89-3</id>
        <name>3</name>
        <sequence type="described" ref="VSP_017179 VSP_017180"/>
    </isoform>
    <isoform>
        <id>Q9WV89-4</id>
        <name>4</name>
        <sequence type="described" ref="VSP_017184 VSP_017185"/>
    </isoform>
    <isoform>
        <id>Q9WV89-5</id>
        <name>5</name>
        <sequence type="described" ref="VSP_017181 VSP_017182"/>
    </isoform>
</comment>
<comment type="tissue specificity">
    <text evidence="6 7">Detected in skeletal muscle, heart, testis, adipocytes and pancreatic islet cells.</text>
</comment>
<comment type="PTM">
    <text evidence="8">Phosphorylated on Ser-99 by PKB/AKT2 after insulin treatment. Phosphorylation on Ser-99 abolishes the interaction with STX4A.</text>
</comment>
<name>STXB4_MOUSE</name>
<reference key="1">
    <citation type="journal article" date="1999" name="Mol. Cell">
        <title>Synip: a novel insulin-regulated syntaxin 4-binding protein mediating GLUT4 translocation in adipocytes.</title>
        <authorList>
            <person name="Min J."/>
            <person name="Okada S."/>
            <person name="Kanzaki M."/>
            <person name="Elmendorf J.S."/>
            <person name="Coker K.J."/>
            <person name="Ceresa B.P."/>
            <person name="Syu L.-J."/>
            <person name="Noda Y."/>
            <person name="Saltiel A.R."/>
            <person name="Pessin J.E."/>
        </authorList>
    </citation>
    <scope>NUCLEOTIDE SEQUENCE [MRNA] (ISOFORM 1)</scope>
    <scope>FUNCTION</scope>
    <scope>SUBCELLULAR LOCATION</scope>
    <scope>INTERACTION WITH STX4A</scope>
    <scope>TISSUE SPECIFICITY</scope>
</reference>
<reference key="2">
    <citation type="journal article" date="2009" name="PLoS Biol.">
        <title>Lineage-specific biology revealed by a finished genome assembly of the mouse.</title>
        <authorList>
            <person name="Church D.M."/>
            <person name="Goodstadt L."/>
            <person name="Hillier L.W."/>
            <person name="Zody M.C."/>
            <person name="Goldstein S."/>
            <person name="She X."/>
            <person name="Bult C.J."/>
            <person name="Agarwala R."/>
            <person name="Cherry J.L."/>
            <person name="DiCuccio M."/>
            <person name="Hlavina W."/>
            <person name="Kapustin Y."/>
            <person name="Meric P."/>
            <person name="Maglott D."/>
            <person name="Birtle Z."/>
            <person name="Marques A.C."/>
            <person name="Graves T."/>
            <person name="Zhou S."/>
            <person name="Teague B."/>
            <person name="Potamousis K."/>
            <person name="Churas C."/>
            <person name="Place M."/>
            <person name="Herschleb J."/>
            <person name="Runnheim R."/>
            <person name="Forrest D."/>
            <person name="Amos-Landgraf J."/>
            <person name="Schwartz D.C."/>
            <person name="Cheng Z."/>
            <person name="Lindblad-Toh K."/>
            <person name="Eichler E.E."/>
            <person name="Ponting C.P."/>
        </authorList>
    </citation>
    <scope>NUCLEOTIDE SEQUENCE [LARGE SCALE GENOMIC DNA]</scope>
    <source>
        <strain>C57BL/6J</strain>
    </source>
</reference>
<reference key="3">
    <citation type="journal article" date="2004" name="Genome Res.">
        <title>The status, quality, and expansion of the NIH full-length cDNA project: the Mammalian Gene Collection (MGC).</title>
        <authorList>
            <consortium name="The MGC Project Team"/>
        </authorList>
    </citation>
    <scope>NUCLEOTIDE SEQUENCE [LARGE SCALE MRNA] (ISOFORM 2)</scope>
    <source>
        <strain>C57BL/6J</strain>
        <tissue>Thymus</tissue>
    </source>
</reference>
<reference key="4">
    <citation type="journal article" date="2005" name="Science">
        <title>The transcriptional landscape of the mammalian genome.</title>
        <authorList>
            <person name="Carninci P."/>
            <person name="Kasukawa T."/>
            <person name="Katayama S."/>
            <person name="Gough J."/>
            <person name="Frith M.C."/>
            <person name="Maeda N."/>
            <person name="Oyama R."/>
            <person name="Ravasi T."/>
            <person name="Lenhard B."/>
            <person name="Wells C."/>
            <person name="Kodzius R."/>
            <person name="Shimokawa K."/>
            <person name="Bajic V.B."/>
            <person name="Brenner S.E."/>
            <person name="Batalov S."/>
            <person name="Forrest A.R."/>
            <person name="Zavolan M."/>
            <person name="Davis M.J."/>
            <person name="Wilming L.G."/>
            <person name="Aidinis V."/>
            <person name="Allen J.E."/>
            <person name="Ambesi-Impiombato A."/>
            <person name="Apweiler R."/>
            <person name="Aturaliya R.N."/>
            <person name="Bailey T.L."/>
            <person name="Bansal M."/>
            <person name="Baxter L."/>
            <person name="Beisel K.W."/>
            <person name="Bersano T."/>
            <person name="Bono H."/>
            <person name="Chalk A.M."/>
            <person name="Chiu K.P."/>
            <person name="Choudhary V."/>
            <person name="Christoffels A."/>
            <person name="Clutterbuck D.R."/>
            <person name="Crowe M.L."/>
            <person name="Dalla E."/>
            <person name="Dalrymple B.P."/>
            <person name="de Bono B."/>
            <person name="Della Gatta G."/>
            <person name="di Bernardo D."/>
            <person name="Down T."/>
            <person name="Engstrom P."/>
            <person name="Fagiolini M."/>
            <person name="Faulkner G."/>
            <person name="Fletcher C.F."/>
            <person name="Fukushima T."/>
            <person name="Furuno M."/>
            <person name="Futaki S."/>
            <person name="Gariboldi M."/>
            <person name="Georgii-Hemming P."/>
            <person name="Gingeras T.R."/>
            <person name="Gojobori T."/>
            <person name="Green R.E."/>
            <person name="Gustincich S."/>
            <person name="Harbers M."/>
            <person name="Hayashi Y."/>
            <person name="Hensch T.K."/>
            <person name="Hirokawa N."/>
            <person name="Hill D."/>
            <person name="Huminiecki L."/>
            <person name="Iacono M."/>
            <person name="Ikeo K."/>
            <person name="Iwama A."/>
            <person name="Ishikawa T."/>
            <person name="Jakt M."/>
            <person name="Kanapin A."/>
            <person name="Katoh M."/>
            <person name="Kawasawa Y."/>
            <person name="Kelso J."/>
            <person name="Kitamura H."/>
            <person name="Kitano H."/>
            <person name="Kollias G."/>
            <person name="Krishnan S.P."/>
            <person name="Kruger A."/>
            <person name="Kummerfeld S.K."/>
            <person name="Kurochkin I.V."/>
            <person name="Lareau L.F."/>
            <person name="Lazarevic D."/>
            <person name="Lipovich L."/>
            <person name="Liu J."/>
            <person name="Liuni S."/>
            <person name="McWilliam S."/>
            <person name="Madan Babu M."/>
            <person name="Madera M."/>
            <person name="Marchionni L."/>
            <person name="Matsuda H."/>
            <person name="Matsuzawa S."/>
            <person name="Miki H."/>
            <person name="Mignone F."/>
            <person name="Miyake S."/>
            <person name="Morris K."/>
            <person name="Mottagui-Tabar S."/>
            <person name="Mulder N."/>
            <person name="Nakano N."/>
            <person name="Nakauchi H."/>
            <person name="Ng P."/>
            <person name="Nilsson R."/>
            <person name="Nishiguchi S."/>
            <person name="Nishikawa S."/>
            <person name="Nori F."/>
            <person name="Ohara O."/>
            <person name="Okazaki Y."/>
            <person name="Orlando V."/>
            <person name="Pang K.C."/>
            <person name="Pavan W.J."/>
            <person name="Pavesi G."/>
            <person name="Pesole G."/>
            <person name="Petrovsky N."/>
            <person name="Piazza S."/>
            <person name="Reed J."/>
            <person name="Reid J.F."/>
            <person name="Ring B.Z."/>
            <person name="Ringwald M."/>
            <person name="Rost B."/>
            <person name="Ruan Y."/>
            <person name="Salzberg S.L."/>
            <person name="Sandelin A."/>
            <person name="Schneider C."/>
            <person name="Schoenbach C."/>
            <person name="Sekiguchi K."/>
            <person name="Semple C.A."/>
            <person name="Seno S."/>
            <person name="Sessa L."/>
            <person name="Sheng Y."/>
            <person name="Shibata Y."/>
            <person name="Shimada H."/>
            <person name="Shimada K."/>
            <person name="Silva D."/>
            <person name="Sinclair B."/>
            <person name="Sperling S."/>
            <person name="Stupka E."/>
            <person name="Sugiura K."/>
            <person name="Sultana R."/>
            <person name="Takenaka Y."/>
            <person name="Taki K."/>
            <person name="Tammoja K."/>
            <person name="Tan S.L."/>
            <person name="Tang S."/>
            <person name="Taylor M.S."/>
            <person name="Tegner J."/>
            <person name="Teichmann S.A."/>
            <person name="Ueda H.R."/>
            <person name="van Nimwegen E."/>
            <person name="Verardo R."/>
            <person name="Wei C.L."/>
            <person name="Yagi K."/>
            <person name="Yamanishi H."/>
            <person name="Zabarovsky E."/>
            <person name="Zhu S."/>
            <person name="Zimmer A."/>
            <person name="Hide W."/>
            <person name="Bult C."/>
            <person name="Grimmond S.M."/>
            <person name="Teasdale R.D."/>
            <person name="Liu E.T."/>
            <person name="Brusic V."/>
            <person name="Quackenbush J."/>
            <person name="Wahlestedt C."/>
            <person name="Mattick J.S."/>
            <person name="Hume D.A."/>
            <person name="Kai C."/>
            <person name="Sasaki D."/>
            <person name="Tomaru Y."/>
            <person name="Fukuda S."/>
            <person name="Kanamori-Katayama M."/>
            <person name="Suzuki M."/>
            <person name="Aoki J."/>
            <person name="Arakawa T."/>
            <person name="Iida J."/>
            <person name="Imamura K."/>
            <person name="Itoh M."/>
            <person name="Kato T."/>
            <person name="Kawaji H."/>
            <person name="Kawagashira N."/>
            <person name="Kawashima T."/>
            <person name="Kojima M."/>
            <person name="Kondo S."/>
            <person name="Konno H."/>
            <person name="Nakano K."/>
            <person name="Ninomiya N."/>
            <person name="Nishio T."/>
            <person name="Okada M."/>
            <person name="Plessy C."/>
            <person name="Shibata K."/>
            <person name="Shiraki T."/>
            <person name="Suzuki S."/>
            <person name="Tagami M."/>
            <person name="Waki K."/>
            <person name="Watahiki A."/>
            <person name="Okamura-Oho Y."/>
            <person name="Suzuki H."/>
            <person name="Kawai J."/>
            <person name="Hayashizaki Y."/>
        </authorList>
    </citation>
    <scope>NUCLEOTIDE SEQUENCE [LARGE SCALE MRNA] OF 368-557 (ISOFORM 4)</scope>
    <source>
        <strain>C57BL/6J</strain>
        <tissue>Spinal cord</tissue>
    </source>
</reference>
<reference key="5">
    <citation type="journal article" date="2003" name="J. Biol. Chem.">
        <title>Syntaxin 4 and Synip (syntaxin 4 interacting protein) regulate insulin secretion in the pancreatic beta HC-9 cell.</title>
        <authorList>
            <person name="Saito T."/>
            <person name="Okada S."/>
            <person name="Yamada E."/>
            <person name="Ohshima K."/>
            <person name="Shimizu H."/>
            <person name="Shimomura K."/>
            <person name="Sato M."/>
            <person name="Pessin J.E."/>
            <person name="Mori M."/>
        </authorList>
    </citation>
    <scope>FUNCTION</scope>
    <scope>TISSUE SPECIFICITY</scope>
</reference>
<reference key="6">
    <citation type="journal article" date="2005" name="J. Cell Biol.">
        <title>Akt2 phosphorylates Synip to regulate docking and fusion of GLUT4-containing vesicles.</title>
        <authorList>
            <person name="Yamada E."/>
            <person name="Okada S."/>
            <person name="Saito T."/>
            <person name="Ohshima K."/>
            <person name="Sato M."/>
            <person name="Tsuchiya T."/>
            <person name="Uehara Y."/>
            <person name="Shimizu H."/>
            <person name="Mori M."/>
        </authorList>
    </citation>
    <scope>PHOSPHORYLATION AT SER-99</scope>
    <scope>MUTAGENESIS OF SER-97 AND SER-99</scope>
</reference>
<reference key="7">
    <citation type="journal article" date="2010" name="Cell">
        <title>A tissue-specific atlas of mouse protein phosphorylation and expression.</title>
        <authorList>
            <person name="Huttlin E.L."/>
            <person name="Jedrychowski M.P."/>
            <person name="Elias J.E."/>
            <person name="Goswami T."/>
            <person name="Rad R."/>
            <person name="Beausoleil S.A."/>
            <person name="Villen J."/>
            <person name="Haas W."/>
            <person name="Sowa M.E."/>
            <person name="Gygi S.P."/>
        </authorList>
    </citation>
    <scope>PHOSPHORYLATION [LARGE SCALE ANALYSIS] AT SER-99</scope>
    <scope>IDENTIFICATION BY MASS SPECTROMETRY [LARGE SCALE ANALYSIS]</scope>
    <source>
        <tissue>Brain</tissue>
        <tissue>Kidney</tissue>
        <tissue>Lung</tissue>
        <tissue>Spleen</tissue>
    </source>
</reference>
<reference key="8">
    <citation type="submission" date="2005-06" db="PDB data bank">
        <title>Solution structure of the PDZ domain of syntaxin binding protein 4.</title>
        <authorList>
            <consortium name="RIKEN structural genomics initiative (RSGI)"/>
        </authorList>
    </citation>
    <scope>STRUCTURE BY NMR OF 12-107</scope>
</reference>
<keyword id="KW-0002">3D-structure</keyword>
<keyword id="KW-0025">Alternative splicing</keyword>
<keyword id="KW-0175">Coiled coil</keyword>
<keyword id="KW-0963">Cytoplasm</keyword>
<keyword id="KW-0597">Phosphoprotein</keyword>
<keyword id="KW-1185">Reference proteome</keyword>
<keyword id="KW-0677">Repeat</keyword>
<gene>
    <name type="primary">Stxbp4</name>
</gene>
<proteinExistence type="evidence at protein level"/>
<evidence type="ECO:0000250" key="1">
    <source>
        <dbReference type="UniProtKB" id="Q6ZWJ1"/>
    </source>
</evidence>
<evidence type="ECO:0000255" key="2"/>
<evidence type="ECO:0000255" key="3">
    <source>
        <dbReference type="PROSITE-ProRule" id="PRU00143"/>
    </source>
</evidence>
<evidence type="ECO:0000255" key="4">
    <source>
        <dbReference type="PROSITE-ProRule" id="PRU00224"/>
    </source>
</evidence>
<evidence type="ECO:0000256" key="5">
    <source>
        <dbReference type="SAM" id="MobiDB-lite"/>
    </source>
</evidence>
<evidence type="ECO:0000269" key="6">
    <source>
    </source>
</evidence>
<evidence type="ECO:0000269" key="7">
    <source>
    </source>
</evidence>
<evidence type="ECO:0000269" key="8">
    <source>
    </source>
</evidence>
<evidence type="ECO:0000303" key="9">
    <source>
    </source>
</evidence>
<evidence type="ECO:0000303" key="10">
    <source>
    </source>
</evidence>
<evidence type="ECO:0000305" key="11"/>
<evidence type="ECO:0007744" key="12">
    <source>
    </source>
</evidence>
<evidence type="ECO:0007829" key="13">
    <source>
        <dbReference type="PDB" id="1WI4"/>
    </source>
</evidence>
<protein>
    <recommendedName>
        <fullName>Syntaxin-binding protein 4</fullName>
    </recommendedName>
    <alternativeName>
        <fullName>Syntaxin 4-interacting protein</fullName>
        <shortName>STX4-interacting protein</shortName>
        <shortName>Synip</shortName>
    </alternativeName>
</protein>
<organism>
    <name type="scientific">Mus musculus</name>
    <name type="common">Mouse</name>
    <dbReference type="NCBI Taxonomy" id="10090"/>
    <lineage>
        <taxon>Eukaryota</taxon>
        <taxon>Metazoa</taxon>
        <taxon>Chordata</taxon>
        <taxon>Craniata</taxon>
        <taxon>Vertebrata</taxon>
        <taxon>Euteleostomi</taxon>
        <taxon>Mammalia</taxon>
        <taxon>Eutheria</taxon>
        <taxon>Euarchontoglires</taxon>
        <taxon>Glires</taxon>
        <taxon>Rodentia</taxon>
        <taxon>Myomorpha</taxon>
        <taxon>Muroidea</taxon>
        <taxon>Muridae</taxon>
        <taxon>Murinae</taxon>
        <taxon>Mus</taxon>
        <taxon>Mus</taxon>
    </lineage>
</organism>
<feature type="chain" id="PRO_0000076331" description="Syntaxin-binding protein 4">
    <location>
        <begin position="1"/>
        <end position="557"/>
    </location>
</feature>
<feature type="domain" description="PDZ" evidence="3">
    <location>
        <begin position="19"/>
        <end position="105"/>
    </location>
</feature>
<feature type="domain" description="WW" evidence="4">
    <location>
        <begin position="500"/>
        <end position="533"/>
    </location>
</feature>
<feature type="region of interest" description="Disordered" evidence="5">
    <location>
        <begin position="142"/>
        <end position="214"/>
    </location>
</feature>
<feature type="coiled-coil region" evidence="2">
    <location>
        <begin position="298"/>
        <end position="408"/>
    </location>
</feature>
<feature type="compositionally biased region" description="Low complexity" evidence="5">
    <location>
        <begin position="142"/>
        <end position="154"/>
    </location>
</feature>
<feature type="compositionally biased region" description="Polar residues" evidence="5">
    <location>
        <begin position="179"/>
        <end position="194"/>
    </location>
</feature>
<feature type="modified residue" description="Phosphoserine" evidence="1">
    <location>
        <position position="10"/>
    </location>
</feature>
<feature type="modified residue" description="Phosphoserine" evidence="1">
    <location>
        <position position="12"/>
    </location>
</feature>
<feature type="modified residue" description="Phosphoserine; by PKB/AKT2" evidence="8 12">
    <location>
        <position position="99"/>
    </location>
</feature>
<feature type="modified residue" description="Phosphoserine" evidence="1">
    <location>
        <position position="216"/>
    </location>
</feature>
<feature type="modified residue" description="Phosphoserine" evidence="1">
    <location>
        <position position="467"/>
    </location>
</feature>
<feature type="splice variant" id="VSP_017179" description="In isoform 3." evidence="11">
    <original>DIAPAWTDDDSGPQGKISLNPSVRLKAEKLEM</original>
    <variation>AHMERKKRHESSGQSKMWHWSCSMMKVEVFIP</variation>
    <location>
        <begin position="195"/>
        <end position="226"/>
    </location>
</feature>
<feature type="splice variant" id="VSP_017180" description="In isoform 3." evidence="11">
    <location>
        <begin position="227"/>
        <end position="557"/>
    </location>
</feature>
<feature type="splice variant" id="VSP_017181" description="In isoform 5." evidence="11">
    <original>ALNYLGIQPTKEQREALREQVQADSKGTVSFG</original>
    <variation>VNPLKKNHFLHKTAGKNCLVLGEEDIGESLVS</variation>
    <location>
        <begin position="227"/>
        <end position="258"/>
    </location>
</feature>
<feature type="splice variant" id="VSP_017182" description="In isoform 5." evidence="11">
    <location>
        <begin position="259"/>
        <end position="557"/>
    </location>
</feature>
<feature type="splice variant" id="VSP_017183" description="In isoform 2." evidence="9">
    <original>LPYGWEEAYTADGIKYFINHVTQTTSWIHPVMSALNLSCAEESEEDCPRELTDPKS</original>
    <variation>KLSLSSSSSPSSSSSFSSSSSCNLLNKAEERP</variation>
    <location>
        <begin position="502"/>
        <end position="557"/>
    </location>
</feature>
<feature type="splice variant" id="VSP_017184" description="In isoform 4." evidence="10">
    <original>N</original>
    <variation>K</variation>
    <location>
        <position position="520"/>
    </location>
</feature>
<feature type="splice variant" id="VSP_017185" description="In isoform 4." evidence="10">
    <location>
        <begin position="521"/>
        <end position="557"/>
    </location>
</feature>
<feature type="mutagenesis site" description="No effect." evidence="8">
    <original>S</original>
    <variation>F</variation>
    <location>
        <position position="97"/>
    </location>
</feature>
<feature type="mutagenesis site" description="Abolishes phosphorylation by PKB/AKT2." evidence="8">
    <original>S</original>
    <variation>F</variation>
    <location>
        <position position="99"/>
    </location>
</feature>
<feature type="strand" evidence="13">
    <location>
        <begin position="20"/>
        <end position="25"/>
    </location>
</feature>
<feature type="strand" evidence="13">
    <location>
        <begin position="33"/>
        <end position="37"/>
    </location>
</feature>
<feature type="strand" evidence="13">
    <location>
        <begin position="39"/>
        <end position="43"/>
    </location>
</feature>
<feature type="strand" evidence="13">
    <location>
        <begin position="45"/>
        <end position="52"/>
    </location>
</feature>
<feature type="helix" evidence="13">
    <location>
        <begin position="57"/>
        <end position="61"/>
    </location>
</feature>
<feature type="strand" evidence="13">
    <location>
        <begin position="69"/>
        <end position="73"/>
    </location>
</feature>
<feature type="helix" evidence="13">
    <location>
        <begin position="83"/>
        <end position="92"/>
    </location>
</feature>
<feature type="strand" evidence="13">
    <location>
        <begin position="96"/>
        <end position="99"/>
    </location>
</feature>
<feature type="strand" evidence="13">
    <location>
        <begin position="101"/>
        <end position="106"/>
    </location>
</feature>